<name>MYO6_PIG</name>
<gene>
    <name type="primary">MYO6</name>
</gene>
<comment type="function">
    <text evidence="2 4 11 12 15">Myosins are actin-based motor molecules with ATPase activity (By similarity). Unconventional myosins serve in intracellular movements (By similarity). Myosin 6 is a reverse-direction motor protein that moves towards the minus-end of actin filaments (By similarity). Has slow rate of actin-activated ADP release due to weak ATP binding (PubMed:15944696). Functions in a variety of intracellular processes such as vesicular membrane trafficking and cell migration (PubMed:16917816). Required for the structural integrity of the Golgi apparatus via the p53-dependent pro-survival pathway (By similarity). Appears to be involved in a very early step of clathrin-mediated endocytosis in polarized epithelial cells (By similarity). Together with TOM1, mediates delivery of endocytic cargo to autophagosomes thereby promoting autophagosome maturation and driving fusion with lysosomes (By similarity). Links TOM1 with autophagy receptors, such as TAX1BP1; CALCOCO2/NDP52 and OPTN (By similarity). May act as a regulator of F-actin dynamics (PubMed:7929586). As part of the DISP complex, may regulate the association of septins with actin and thereby regulate the actin cytoskeleton (By similarity). May play a role in transporting DAB2 from the plasma membrane to specific cellular targets (By similarity). May play a role in the extension and network organization of neurites (By similarity). Required for structural integrity of inner ear hair cells (By similarity). Required for the correct localization of CLIC5 and RDX at the stereocilium base (By similarity). Modulates RNA polymerase II-dependent transcription (By similarity).</text>
</comment>
<comment type="subunit">
    <text evidence="1 2 3 4 9 10 13 14 15">Homodimer; dimerization seems to implicate the unfolding of the three-helix bundle region creating an additional calmodulin binding site, and cargo binding (PubMed:19664948, PubMed:25159143). Component of the DISP/DOCK7-induced septin displacement complex, at least composed of DOCK7, LRCH3 and MYO6 (By similarity). Able to function as a monomer under specific conditions in vitro (By similarity). Forms a complex with CFTR and DAB2 in the apical membrane of epithelial cells (By similarity). Binding to calmodulin through a unique insert, not found in other myosins, located in the neck region between the motor domain and the IQ domain appears to contribute to the directionality reversal (PubMed:15037754). This interaction occurs only if the C-terminal lobe of calmodulin is occupied by calcium (PubMed:12682054, PubMed:15037754). Interaction with F-actin/ACTN1 occurs only at the apical brush border domain of the proximal tubule cells (PubMed:7929586). Interacts with DAB2 (By similarity). In vitro, the C-terminal globular tail binds a C-terminal region of DAB2 (By similarity). Interacts with CFTR (By similarity). Interacts with CABP5 (By similarity). Interacts (via residues 1117-1245) with TOM1 (via residues 392-463) (By similarity). Interacts (via residues 1060-1285) with OPTN (By similarity). Interacts (via residues 1060-1285) with TAX1BP1 and CALCOCO2/NDP52 (By similarity). Interacts with TOM1L2 (By similarity). Interacts with CLIC5; may work together in a complex which also includes RDX and MYO6 to stabilize linkages between the plasma membrane and subjacent actin cytoskeleton at the base of stereocilia (By similarity).</text>
</comment>
<comment type="interaction">
    <interactant intactId="EBI-15804516">
        <id>Q29122</id>
    </interactant>
    <interactant intactId="EBI-15804617">
        <id>P98082-1</id>
        <label>DAB2</label>
    </interactant>
    <organismsDiffer>true</organismsDiffer>
    <experiments>2</experiments>
</comment>
<comment type="interaction">
    <interactant intactId="EBI-15804516">
        <id>Q29122</id>
    </interactant>
    <interactant intactId="EBI-748974">
        <id>Q96CV9</id>
        <label>OPTN</label>
    </interactant>
    <organismsDiffer>true</organismsDiffer>
    <experiments>3</experiments>
</comment>
<comment type="subcellular location">
    <subcellularLocation>
        <location evidence="4">Golgi apparatus</location>
        <location evidence="4">trans-Golgi network membrane</location>
        <topology evidence="4">Peripheral membrane protein</topology>
    </subcellularLocation>
    <subcellularLocation>
        <location evidence="4">Golgi apparatus</location>
    </subcellularLocation>
    <subcellularLocation>
        <location evidence="4">Nucleus</location>
    </subcellularLocation>
    <subcellularLocation>
        <location evidence="4">Cytoplasm</location>
        <location evidence="4">Perinuclear region</location>
    </subcellularLocation>
    <subcellularLocation>
        <location evidence="4">Membrane</location>
        <location evidence="4">Clathrin-coated pit</location>
    </subcellularLocation>
    <subcellularLocation>
        <location evidence="4">Cytoplasmic vesicle</location>
        <location evidence="4">Clathrin-coated vesicle</location>
    </subcellularLocation>
    <subcellularLocation>
        <location evidence="4">Cell projection</location>
        <location evidence="4">Filopodium</location>
    </subcellularLocation>
    <subcellularLocation>
        <location evidence="12">Cell projection</location>
        <location evidence="12">Ruffle membrane</location>
    </subcellularLocation>
    <subcellularLocation>
        <location evidence="4">Cell projection</location>
        <location evidence="4">Microvillus</location>
    </subcellularLocation>
    <subcellularLocation>
        <location evidence="15">Cytoplasm</location>
        <location evidence="15">Cytosol</location>
    </subcellularLocation>
    <text evidence="3 4 12">Also present in endocytic vesicles (PubMed:16917816). Translocates from membrane ruffles, endocytic vesicles and cytoplasm to Golgi apparatus, perinuclear membrane and nucleus through induction by p53 and p53-induced DNA damage (By similarity). Recruited into membrane ruffles from cell surface by EGF-stimulation (By similarity). Colocalizes with DAB2 in clathrin-coated pits/vesicles (By similarity). Colocalizes with OPTN at the Golgi complex and in vesicular structures close to the plasma membrane (By similarity).</text>
</comment>
<comment type="tissue specificity">
    <text evidence="15">Expressed in all tissues examined including kidney cortex, intestinal mucosa, liver, lung, heart, jowl muscle, brain cortex and medulla, and in the epithelial cell line, LLC-PK1 (at protein level) (PubMed:7929586). In the kidney, located to the brush border of adult kidney proximal tubule cells (PubMed:7929586).</text>
</comment>
<comment type="developmental stage">
    <text>Locates to the apical domain only during the final stages of kidney proximal tubule development.</text>
</comment>
<comment type="domain">
    <text evidence="13 14">Divided into three regions: a N-terminal motor (head) domain, followed by a neck domain consisting of a calmodulin-binding linker domain and a single IQ motif, and a C-terminal tail region with a three-helix bundle region, a SAH domain and a unique globular domain required for interaction with other proteins such as cargo-binding.</text>
</comment>
<comment type="domain">
    <text evidence="4">The SAH (single alpha-helix) region is characterized by a high content of charged residues which are predicted to stabilize the alpha-helical structure by ionic bonds. Its contribution to the mechanism conferring the myosin movement on actin filaments is debated.</text>
</comment>
<comment type="PTM">
    <text evidence="9">Phosphorylation in the motor domain, induced by EGF, results in translocation of MYO6 from the cell surface to membrane ruffles and affects F-actin dynamics. Phosphorylated in vitro by p21-activated kinase (PAK).</text>
</comment>
<comment type="similarity">
    <text evidence="16">Belongs to the TRAFAC class myosin-kinesin ATPase superfamily. Myosin family.</text>
</comment>
<comment type="caution">
    <text evidence="16">Represents an unconventional myosin. This protein should not be confused with the conventional myosin-6 (MYH6).</text>
</comment>
<comment type="caution">
    <text evidence="16">Originally predicted to contain a coiled coil domain but generally accepted to contain a stable SAH domain instead.</text>
</comment>
<dbReference type="EMBL" id="Z35331">
    <property type="protein sequence ID" value="CAA84559.1"/>
    <property type="molecule type" value="mRNA"/>
</dbReference>
<dbReference type="PIR" id="A54818">
    <property type="entry name" value="A54818"/>
</dbReference>
<dbReference type="RefSeq" id="NP_999186.1">
    <property type="nucleotide sequence ID" value="NM_214021.1"/>
</dbReference>
<dbReference type="PDB" id="2BKH">
    <property type="method" value="X-ray"/>
    <property type="resolution" value="2.40 A"/>
    <property type="chains" value="A=2-816"/>
</dbReference>
<dbReference type="PDB" id="2BKI">
    <property type="method" value="X-ray"/>
    <property type="resolution" value="2.90 A"/>
    <property type="chains" value="A=1-859"/>
</dbReference>
<dbReference type="PDB" id="2V26">
    <property type="method" value="X-ray"/>
    <property type="resolution" value="1.75 A"/>
    <property type="chains" value="A=5-789"/>
</dbReference>
<dbReference type="PDB" id="2VAS">
    <property type="method" value="X-ray"/>
    <property type="resolution" value="2.40 A"/>
    <property type="chains" value="A=2-816"/>
</dbReference>
<dbReference type="PDB" id="2VB6">
    <property type="method" value="X-ray"/>
    <property type="resolution" value="2.30 A"/>
    <property type="chains" value="A=2-816"/>
</dbReference>
<dbReference type="PDB" id="2X51">
    <property type="method" value="X-ray"/>
    <property type="resolution" value="2.20 A"/>
    <property type="chains" value="A=1-816"/>
</dbReference>
<dbReference type="PDB" id="3GN4">
    <property type="method" value="X-ray"/>
    <property type="resolution" value="2.70 A"/>
    <property type="chains" value="A/E=771-918"/>
</dbReference>
<dbReference type="PDB" id="3L9I">
    <property type="method" value="X-ray"/>
    <property type="resolution" value="2.20 A"/>
    <property type="chains" value="A=2-816"/>
</dbReference>
<dbReference type="PDB" id="4ANJ">
    <property type="method" value="X-ray"/>
    <property type="resolution" value="2.60 A"/>
    <property type="chains" value="A=1-817"/>
</dbReference>
<dbReference type="PDB" id="4DBP">
    <property type="method" value="X-ray"/>
    <property type="resolution" value="2.20 A"/>
    <property type="chains" value="A=2-816"/>
</dbReference>
<dbReference type="PDB" id="4DBQ">
    <property type="method" value="X-ray"/>
    <property type="resolution" value="2.60 A"/>
    <property type="chains" value="A=2-816"/>
</dbReference>
<dbReference type="PDB" id="4DBR">
    <property type="method" value="X-ray"/>
    <property type="resolution" value="1.95 A"/>
    <property type="chains" value="A=5-790"/>
</dbReference>
<dbReference type="PDB" id="5O2L">
    <property type="method" value="X-ray"/>
    <property type="resolution" value="2.20 A"/>
    <property type="chains" value="A=5-790"/>
</dbReference>
<dbReference type="PDB" id="6BNP">
    <property type="method" value="EM"/>
    <property type="resolution" value="4.60 A"/>
    <property type="chains" value="I/J/K/L/M/N=2-706"/>
</dbReference>
<dbReference type="PDB" id="6BNQ">
    <property type="method" value="EM"/>
    <property type="resolution" value="5.50 A"/>
    <property type="chains" value="I/J/K/L/M/N=2-706"/>
</dbReference>
<dbReference type="PDB" id="6BNV">
    <property type="method" value="EM"/>
    <property type="resolution" value="4.60 A"/>
    <property type="chains" value="I/J/K/L/M/N=2-818"/>
</dbReference>
<dbReference type="PDB" id="6BNW">
    <property type="method" value="EM"/>
    <property type="resolution" value="5.50 A"/>
    <property type="chains" value="I/J/K/L/M/N=2-818"/>
</dbReference>
<dbReference type="PDBsum" id="2BKH"/>
<dbReference type="PDBsum" id="2BKI"/>
<dbReference type="PDBsum" id="2V26"/>
<dbReference type="PDBsum" id="2VAS"/>
<dbReference type="PDBsum" id="2VB6"/>
<dbReference type="PDBsum" id="2X51"/>
<dbReference type="PDBsum" id="3GN4"/>
<dbReference type="PDBsum" id="3L9I"/>
<dbReference type="PDBsum" id="4ANJ"/>
<dbReference type="PDBsum" id="4DBP"/>
<dbReference type="PDBsum" id="4DBQ"/>
<dbReference type="PDBsum" id="4DBR"/>
<dbReference type="PDBsum" id="5O2L"/>
<dbReference type="PDBsum" id="6BNP"/>
<dbReference type="PDBsum" id="6BNQ"/>
<dbReference type="PDBsum" id="6BNV"/>
<dbReference type="PDBsum" id="6BNW"/>
<dbReference type="SMR" id="Q29122"/>
<dbReference type="BioGRID" id="1149220">
    <property type="interactions" value="2"/>
</dbReference>
<dbReference type="DIP" id="DIP-48994N"/>
<dbReference type="FunCoup" id="Q29122">
    <property type="interactions" value="421"/>
</dbReference>
<dbReference type="IntAct" id="Q29122">
    <property type="interactions" value="2"/>
</dbReference>
<dbReference type="STRING" id="9823.ENSSSCP00000069154"/>
<dbReference type="GlyGen" id="Q29122">
    <property type="glycosylation" value="1 site"/>
</dbReference>
<dbReference type="iPTMnet" id="Q29122"/>
<dbReference type="PaxDb" id="9823-ENSSSCP00000004831"/>
<dbReference type="PeptideAtlas" id="Q29122"/>
<dbReference type="GeneID" id="397085"/>
<dbReference type="KEGG" id="ssc:397085"/>
<dbReference type="CTD" id="4646"/>
<dbReference type="eggNOG" id="KOG0163">
    <property type="taxonomic scope" value="Eukaryota"/>
</dbReference>
<dbReference type="InParanoid" id="Q29122"/>
<dbReference type="OrthoDB" id="6108017at2759"/>
<dbReference type="EvolutionaryTrace" id="Q29122"/>
<dbReference type="Proteomes" id="UP000008227">
    <property type="component" value="Unplaced"/>
</dbReference>
<dbReference type="Proteomes" id="UP000314985">
    <property type="component" value="Unplaced"/>
</dbReference>
<dbReference type="Proteomes" id="UP000694570">
    <property type="component" value="Unplaced"/>
</dbReference>
<dbReference type="Proteomes" id="UP000694571">
    <property type="component" value="Unplaced"/>
</dbReference>
<dbReference type="Proteomes" id="UP000694720">
    <property type="component" value="Unplaced"/>
</dbReference>
<dbReference type="Proteomes" id="UP000694722">
    <property type="component" value="Unplaced"/>
</dbReference>
<dbReference type="Proteomes" id="UP000694723">
    <property type="component" value="Unplaced"/>
</dbReference>
<dbReference type="Proteomes" id="UP000694724">
    <property type="component" value="Unplaced"/>
</dbReference>
<dbReference type="Proteomes" id="UP000694725">
    <property type="component" value="Unplaced"/>
</dbReference>
<dbReference type="Proteomes" id="UP000694726">
    <property type="component" value="Unplaced"/>
</dbReference>
<dbReference type="Proteomes" id="UP000694727">
    <property type="component" value="Unplaced"/>
</dbReference>
<dbReference type="Proteomes" id="UP000694728">
    <property type="component" value="Unplaced"/>
</dbReference>
<dbReference type="GO" id="GO:0015629">
    <property type="term" value="C:actin cytoskeleton"/>
    <property type="evidence" value="ECO:0000318"/>
    <property type="project" value="GO_Central"/>
</dbReference>
<dbReference type="GO" id="GO:0005884">
    <property type="term" value="C:actin filament"/>
    <property type="evidence" value="ECO:0000315"/>
    <property type="project" value="UniProtKB"/>
</dbReference>
<dbReference type="GO" id="GO:0005938">
    <property type="term" value="C:cell cortex"/>
    <property type="evidence" value="ECO:0000314"/>
    <property type="project" value="UniProtKB"/>
</dbReference>
<dbReference type="GO" id="GO:0030136">
    <property type="term" value="C:clathrin-coated vesicle"/>
    <property type="evidence" value="ECO:0007669"/>
    <property type="project" value="UniProtKB-SubCell"/>
</dbReference>
<dbReference type="GO" id="GO:0005737">
    <property type="term" value="C:cytoplasm"/>
    <property type="evidence" value="ECO:0000314"/>
    <property type="project" value="UniProtKB"/>
</dbReference>
<dbReference type="GO" id="GO:0031410">
    <property type="term" value="C:cytoplasmic vesicle"/>
    <property type="evidence" value="ECO:0000250"/>
    <property type="project" value="UniProtKB"/>
</dbReference>
<dbReference type="GO" id="GO:0005829">
    <property type="term" value="C:cytosol"/>
    <property type="evidence" value="ECO:0007669"/>
    <property type="project" value="UniProtKB-SubCell"/>
</dbReference>
<dbReference type="GO" id="GO:0031941">
    <property type="term" value="C:filamentous actin"/>
    <property type="evidence" value="ECO:0000314"/>
    <property type="project" value="UniProtKB"/>
</dbReference>
<dbReference type="GO" id="GO:0030175">
    <property type="term" value="C:filopodium"/>
    <property type="evidence" value="ECO:0007669"/>
    <property type="project" value="UniProtKB-SubCell"/>
</dbReference>
<dbReference type="GO" id="GO:0005794">
    <property type="term" value="C:Golgi apparatus"/>
    <property type="evidence" value="ECO:0000250"/>
    <property type="project" value="UniProtKB"/>
</dbReference>
<dbReference type="GO" id="GO:0005902">
    <property type="term" value="C:microvillus"/>
    <property type="evidence" value="ECO:0007669"/>
    <property type="project" value="UniProtKB-SubCell"/>
</dbReference>
<dbReference type="GO" id="GO:0016459">
    <property type="term" value="C:myosin complex"/>
    <property type="evidence" value="ECO:0007669"/>
    <property type="project" value="UniProtKB-KW"/>
</dbReference>
<dbReference type="GO" id="GO:0031965">
    <property type="term" value="C:nuclear membrane"/>
    <property type="evidence" value="ECO:0000250"/>
    <property type="project" value="UniProtKB"/>
</dbReference>
<dbReference type="GO" id="GO:0005654">
    <property type="term" value="C:nucleoplasm"/>
    <property type="evidence" value="ECO:0000250"/>
    <property type="project" value="UniProtKB"/>
</dbReference>
<dbReference type="GO" id="GO:0005634">
    <property type="term" value="C:nucleus"/>
    <property type="evidence" value="ECO:0000250"/>
    <property type="project" value="UniProtKB"/>
</dbReference>
<dbReference type="GO" id="GO:0048471">
    <property type="term" value="C:perinuclear region of cytoplasm"/>
    <property type="evidence" value="ECO:0000314"/>
    <property type="project" value="UniProtKB"/>
</dbReference>
<dbReference type="GO" id="GO:0005886">
    <property type="term" value="C:plasma membrane"/>
    <property type="evidence" value="ECO:0000318"/>
    <property type="project" value="GO_Central"/>
</dbReference>
<dbReference type="GO" id="GO:0001726">
    <property type="term" value="C:ruffle"/>
    <property type="evidence" value="ECO:0000250"/>
    <property type="project" value="UniProtKB"/>
</dbReference>
<dbReference type="GO" id="GO:0032587">
    <property type="term" value="C:ruffle membrane"/>
    <property type="evidence" value="ECO:0007669"/>
    <property type="project" value="UniProtKB-SubCell"/>
</dbReference>
<dbReference type="GO" id="GO:0051015">
    <property type="term" value="F:actin filament binding"/>
    <property type="evidence" value="ECO:0000314"/>
    <property type="project" value="UniProtKB"/>
</dbReference>
<dbReference type="GO" id="GO:0043531">
    <property type="term" value="F:ADP binding"/>
    <property type="evidence" value="ECO:0000314"/>
    <property type="project" value="UniProtKB"/>
</dbReference>
<dbReference type="GO" id="GO:0005524">
    <property type="term" value="F:ATP binding"/>
    <property type="evidence" value="ECO:0007669"/>
    <property type="project" value="UniProtKB-KW"/>
</dbReference>
<dbReference type="GO" id="GO:0005516">
    <property type="term" value="F:calmodulin binding"/>
    <property type="evidence" value="ECO:0000353"/>
    <property type="project" value="UniProtKB"/>
</dbReference>
<dbReference type="GO" id="GO:0003774">
    <property type="term" value="F:cytoskeletal motor activity"/>
    <property type="evidence" value="ECO:0000314"/>
    <property type="project" value="UniProtKB"/>
</dbReference>
<dbReference type="GO" id="GO:0000146">
    <property type="term" value="F:microfilament motor activity"/>
    <property type="evidence" value="ECO:0000318"/>
    <property type="project" value="GO_Central"/>
</dbReference>
<dbReference type="GO" id="GO:0007015">
    <property type="term" value="P:actin filament organization"/>
    <property type="evidence" value="ECO:0000318"/>
    <property type="project" value="GO_Central"/>
</dbReference>
<dbReference type="GO" id="GO:0030048">
    <property type="term" value="P:actin filament-based movement"/>
    <property type="evidence" value="ECO:0000314"/>
    <property type="project" value="UniProtKB"/>
</dbReference>
<dbReference type="GO" id="GO:0030330">
    <property type="term" value="P:DNA damage response, signal transduction by p53 class mediator"/>
    <property type="evidence" value="ECO:0000250"/>
    <property type="project" value="UniProtKB"/>
</dbReference>
<dbReference type="GO" id="GO:0006897">
    <property type="term" value="P:endocytosis"/>
    <property type="evidence" value="ECO:0000315"/>
    <property type="project" value="UniProtKB"/>
</dbReference>
<dbReference type="GO" id="GO:0042491">
    <property type="term" value="P:inner ear auditory receptor cell differentiation"/>
    <property type="evidence" value="ECO:0000318"/>
    <property type="project" value="GO_Central"/>
</dbReference>
<dbReference type="GO" id="GO:0042472">
    <property type="term" value="P:inner ear morphogenesis"/>
    <property type="evidence" value="ECO:0000318"/>
    <property type="project" value="GO_Central"/>
</dbReference>
<dbReference type="GO" id="GO:0006886">
    <property type="term" value="P:intracellular protein transport"/>
    <property type="evidence" value="ECO:0000315"/>
    <property type="project" value="UniProtKB"/>
</dbReference>
<dbReference type="GO" id="GO:0008104">
    <property type="term" value="P:protein localization"/>
    <property type="evidence" value="ECO:0000250"/>
    <property type="project" value="UniProtKB"/>
</dbReference>
<dbReference type="GO" id="GO:0051046">
    <property type="term" value="P:regulation of secretion"/>
    <property type="evidence" value="ECO:0000250"/>
    <property type="project" value="UniProtKB"/>
</dbReference>
<dbReference type="GO" id="GO:0007605">
    <property type="term" value="P:sensory perception of sound"/>
    <property type="evidence" value="ECO:0007669"/>
    <property type="project" value="UniProtKB-KW"/>
</dbReference>
<dbReference type="CDD" id="cd21759">
    <property type="entry name" value="CBD_MYO6-like"/>
    <property type="match status" value="1"/>
</dbReference>
<dbReference type="CDD" id="cd22294">
    <property type="entry name" value="MYO6_MIU_linker"/>
    <property type="match status" value="1"/>
</dbReference>
<dbReference type="CDD" id="cd01382">
    <property type="entry name" value="MYSc_Myo6"/>
    <property type="match status" value="1"/>
</dbReference>
<dbReference type="CDD" id="cd21958">
    <property type="entry name" value="MyUb_Myo6"/>
    <property type="match status" value="1"/>
</dbReference>
<dbReference type="FunFam" id="1.20.58.530:FF:000006">
    <property type="entry name" value="Putative unconventional myosin-VI"/>
    <property type="match status" value="1"/>
</dbReference>
<dbReference type="FunFam" id="2.30.30.360:FF:000002">
    <property type="entry name" value="Unconventional myosin-VI"/>
    <property type="match status" value="1"/>
</dbReference>
<dbReference type="FunFam" id="1.20.120.720:FF:000005">
    <property type="entry name" value="unconventional myosin-VI isoform X1"/>
    <property type="match status" value="1"/>
</dbReference>
<dbReference type="FunFam" id="3.30.70.1590:FF:000002">
    <property type="entry name" value="unconventional myosin-VI isoform X1"/>
    <property type="match status" value="1"/>
</dbReference>
<dbReference type="FunFam" id="3.40.850.10:FF:000018">
    <property type="entry name" value="unconventional myosin-VI isoform X1"/>
    <property type="match status" value="1"/>
</dbReference>
<dbReference type="FunFam" id="3.40.850.10:FF:000030">
    <property type="entry name" value="unconventional myosin-VI isoform X1"/>
    <property type="match status" value="1"/>
</dbReference>
<dbReference type="FunFam" id="1.10.10.820:FF:000005">
    <property type="entry name" value="unconventional myosin-VI isoform X2"/>
    <property type="match status" value="1"/>
</dbReference>
<dbReference type="Gene3D" id="1.10.10.820">
    <property type="match status" value="1"/>
</dbReference>
<dbReference type="Gene3D" id="1.20.58.530">
    <property type="match status" value="1"/>
</dbReference>
<dbReference type="Gene3D" id="3.30.70.1590">
    <property type="match status" value="1"/>
</dbReference>
<dbReference type="Gene3D" id="6.10.220.10">
    <property type="match status" value="1"/>
</dbReference>
<dbReference type="Gene3D" id="3.40.850.10">
    <property type="entry name" value="Kinesin motor domain"/>
    <property type="match status" value="2"/>
</dbReference>
<dbReference type="Gene3D" id="2.30.30.360">
    <property type="entry name" value="Myosin S1 fragment, N-terminal"/>
    <property type="match status" value="1"/>
</dbReference>
<dbReference type="Gene3D" id="1.20.120.720">
    <property type="entry name" value="Myosin VI head, motor domain, U50 subdomain"/>
    <property type="match status" value="1"/>
</dbReference>
<dbReference type="InterPro" id="IPR036961">
    <property type="entry name" value="Kinesin_motor_dom_sf"/>
</dbReference>
<dbReference type="InterPro" id="IPR049016">
    <property type="entry name" value="MYO6_lever"/>
</dbReference>
<dbReference type="InterPro" id="IPR032412">
    <property type="entry name" value="Myosin-VI_CBD"/>
</dbReference>
<dbReference type="InterPro" id="IPR001609">
    <property type="entry name" value="Myosin_head_motor_dom-like"/>
</dbReference>
<dbReference type="InterPro" id="IPR004009">
    <property type="entry name" value="Myosin_N"/>
</dbReference>
<dbReference type="InterPro" id="IPR008989">
    <property type="entry name" value="Myosin_S1_N"/>
</dbReference>
<dbReference type="InterPro" id="IPR036114">
    <property type="entry name" value="MYSc_Myo6"/>
</dbReference>
<dbReference type="InterPro" id="IPR027417">
    <property type="entry name" value="P-loop_NTPase"/>
</dbReference>
<dbReference type="PANTHER" id="PTHR13140">
    <property type="entry name" value="MYOSIN"/>
    <property type="match status" value="1"/>
</dbReference>
<dbReference type="PANTHER" id="PTHR13140:SF745">
    <property type="entry name" value="UNCONVENTIONAL MYOSIN-VI"/>
    <property type="match status" value="1"/>
</dbReference>
<dbReference type="Pfam" id="PF21521">
    <property type="entry name" value="MYO6_lever"/>
    <property type="match status" value="1"/>
</dbReference>
<dbReference type="Pfam" id="PF16521">
    <property type="entry name" value="Myosin-VI_CBD"/>
    <property type="match status" value="1"/>
</dbReference>
<dbReference type="Pfam" id="PF00063">
    <property type="entry name" value="Myosin_head"/>
    <property type="match status" value="1"/>
</dbReference>
<dbReference type="PRINTS" id="PR00193">
    <property type="entry name" value="MYOSINHEAVY"/>
</dbReference>
<dbReference type="SMART" id="SM00242">
    <property type="entry name" value="MYSc"/>
    <property type="match status" value="1"/>
</dbReference>
<dbReference type="SUPFAM" id="SSF52540">
    <property type="entry name" value="P-loop containing nucleoside triphosphate hydrolases"/>
    <property type="match status" value="1"/>
</dbReference>
<dbReference type="PROSITE" id="PS51456">
    <property type="entry name" value="MYOSIN_MOTOR"/>
    <property type="match status" value="1"/>
</dbReference>
<dbReference type="PROSITE" id="PS51844">
    <property type="entry name" value="SH3_LIKE"/>
    <property type="match status" value="1"/>
</dbReference>
<protein>
    <recommendedName>
        <fullName>Unconventional myosin-VI</fullName>
    </recommendedName>
    <alternativeName>
        <fullName>Unconventional myosin-6</fullName>
    </alternativeName>
</protein>
<feature type="chain" id="PRO_0000271746" description="Unconventional myosin-VI">
    <location>
        <begin position="1"/>
        <end position="1254"/>
    </location>
</feature>
<feature type="domain" description="Myosin N-terminal SH3-like" evidence="7">
    <location>
        <begin position="2"/>
        <end position="53"/>
    </location>
</feature>
<feature type="domain" description="Myosin motor" evidence="6">
    <location>
        <begin position="57"/>
        <end position="772"/>
    </location>
</feature>
<feature type="domain" description="IQ" evidence="10">
    <location>
        <begin position="814"/>
        <end position="843"/>
    </location>
</feature>
<feature type="region of interest" description="Responsible for slow ATPase activity" evidence="11">
    <location>
        <begin position="273"/>
        <end position="317"/>
    </location>
</feature>
<feature type="region of interest" description="Actin-binding" evidence="5">
    <location>
        <begin position="666"/>
        <end position="673"/>
    </location>
</feature>
<feature type="region of interest" description="Required for binding calmodulin" evidence="10">
    <location>
        <begin position="783"/>
        <end position="811"/>
    </location>
</feature>
<feature type="region of interest" description="Three-helix bundle" evidence="17">
    <location>
        <begin position="836"/>
        <end position="917"/>
    </location>
</feature>
<feature type="region of interest" description="SAH" evidence="4">
    <location>
        <begin position="918"/>
        <end position="985"/>
    </location>
</feature>
<feature type="region of interest" description="Disordered" evidence="8">
    <location>
        <begin position="935"/>
        <end position="956"/>
    </location>
</feature>
<feature type="region of interest" description="Interaction with TAX1BP1 and CALCOCO2/NDP52" evidence="4">
    <location>
        <begin position="1037"/>
        <end position="1245"/>
    </location>
</feature>
<feature type="region of interest" description="Interaction with OPTN" evidence="3">
    <location>
        <begin position="1085"/>
        <end position="1087"/>
    </location>
</feature>
<feature type="region of interest" description="Disordered" evidence="8">
    <location>
        <begin position="1096"/>
        <end position="1117"/>
    </location>
</feature>
<feature type="region of interest" description="Interaction with TOM1" evidence="4">
    <location>
        <begin position="1117"/>
        <end position="1245"/>
    </location>
</feature>
<feature type="binding site" evidence="5">
    <location>
        <begin position="151"/>
        <end position="158"/>
    </location>
    <ligand>
        <name>ATP</name>
        <dbReference type="ChEBI" id="CHEBI:30616"/>
    </ligand>
</feature>
<feature type="modified residue" description="Phosphoserine" evidence="4">
    <location>
        <position position="267"/>
    </location>
</feature>
<feature type="modified residue" description="Phosphothreonine" evidence="9">
    <location>
        <position position="406"/>
    </location>
</feature>
<feature type="modified residue" description="Phosphoserine" evidence="2">
    <location>
        <position position="605"/>
    </location>
</feature>
<feature type="modified residue" description="Phosphoserine" evidence="2">
    <location>
        <position position="1026"/>
    </location>
</feature>
<feature type="mutagenesis site" description="Greatly reduced phosphorylation. Transports uncoated endocytic vesicles to clusters at distinct peripheral sites and alters actin filament structure." evidence="9 12">
    <original>T</original>
    <variation>E</variation>
    <location>
        <position position="406"/>
    </location>
</feature>
<feature type="mutagenesis site" description="Abolishes additional calmodulin-binding upon unfolding three-helix bundle; when associated with A-854, A-857, A-858 and A-861." evidence="14">
    <original>L</original>
    <variation>A</variation>
    <location>
        <position position="851"/>
    </location>
</feature>
<feature type="mutagenesis site" description="Abolishes additional calmodulin-binding upon unfolding three-helix bundle; when associated with A-851, A-857, A-858 and A-861." evidence="14">
    <original>F</original>
    <variation>A</variation>
    <location>
        <position position="854"/>
    </location>
</feature>
<feature type="mutagenesis site" description="Abolishes additional calmodulin-binding upon unfolding three-helix bundle; when associated with A-851, A-854, A-858 and A-861." evidence="14">
    <original>V</original>
    <variation>A</variation>
    <location>
        <position position="857"/>
    </location>
</feature>
<feature type="mutagenesis site" description="Abolishes additional calmodulin-binding upon unfolding three-helix bundle; when associated with A-851, A-851, A-857 and A-861." evidence="14">
    <original>V</original>
    <variation>A</variation>
    <location>
        <position position="858"/>
    </location>
</feature>
<feature type="mutagenesis site" description="Abolishes additional calmodulin-binding upon unfolding three-helix bundle; when associated with A-851, A-854, A-857 and A-858." evidence="14">
    <original>L</original>
    <variation>A</variation>
    <location>
        <position position="861"/>
    </location>
</feature>
<feature type="strand" evidence="20">
    <location>
        <begin position="7"/>
        <end position="11"/>
    </location>
</feature>
<feature type="turn" evidence="20">
    <location>
        <begin position="12"/>
        <end position="14"/>
    </location>
</feature>
<feature type="strand" evidence="20">
    <location>
        <begin position="15"/>
        <end position="24"/>
    </location>
</feature>
<feature type="strand" evidence="20">
    <location>
        <begin position="26"/>
        <end position="32"/>
    </location>
</feature>
<feature type="turn" evidence="18">
    <location>
        <begin position="34"/>
        <end position="36"/>
    </location>
</feature>
<feature type="strand" evidence="20">
    <location>
        <begin position="41"/>
        <end position="44"/>
    </location>
</feature>
<feature type="helix" evidence="20">
    <location>
        <begin position="45"/>
        <end position="47"/>
    </location>
</feature>
<feature type="helix" evidence="20">
    <location>
        <begin position="62"/>
        <end position="64"/>
    </location>
</feature>
<feature type="strand" evidence="20">
    <location>
        <begin position="65"/>
        <end position="67"/>
    </location>
</feature>
<feature type="helix" evidence="20">
    <location>
        <begin position="70"/>
        <end position="82"/>
    </location>
</feature>
<feature type="strand" evidence="20">
    <location>
        <begin position="87"/>
        <end position="90"/>
    </location>
</feature>
<feature type="strand" evidence="20">
    <location>
        <begin position="93"/>
        <end position="97"/>
    </location>
</feature>
<feature type="turn" evidence="20">
    <location>
        <begin position="104"/>
        <end position="107"/>
    </location>
</feature>
<feature type="helix" evidence="20">
    <location>
        <begin position="109"/>
        <end position="115"/>
    </location>
</feature>
<feature type="turn" evidence="23">
    <location>
        <begin position="120"/>
        <end position="122"/>
    </location>
</feature>
<feature type="helix" evidence="20">
    <location>
        <begin position="127"/>
        <end position="141"/>
    </location>
</feature>
<feature type="strand" evidence="20">
    <location>
        <begin position="145"/>
        <end position="150"/>
    </location>
</feature>
<feature type="helix" evidence="20">
    <location>
        <begin position="157"/>
        <end position="172"/>
    </location>
</feature>
<feature type="strand" evidence="26">
    <location>
        <begin position="173"/>
        <end position="175"/>
    </location>
</feature>
<feature type="helix" evidence="27">
    <location>
        <begin position="177"/>
        <end position="179"/>
    </location>
</feature>
<feature type="helix" evidence="20">
    <location>
        <begin position="181"/>
        <end position="184"/>
    </location>
</feature>
<feature type="helix" evidence="20">
    <location>
        <begin position="186"/>
        <end position="193"/>
    </location>
</feature>
<feature type="strand" evidence="27">
    <location>
        <begin position="194"/>
        <end position="197"/>
    </location>
</feature>
<feature type="strand" evidence="19">
    <location>
        <begin position="201"/>
        <end position="204"/>
    </location>
</feature>
<feature type="strand" evidence="20">
    <location>
        <begin position="206"/>
        <end position="214"/>
    </location>
</feature>
<feature type="strand" evidence="20">
    <location>
        <begin position="220"/>
        <end position="228"/>
    </location>
</feature>
<feature type="helix" evidence="20">
    <location>
        <begin position="233"/>
        <end position="235"/>
    </location>
</feature>
<feature type="helix" evidence="20">
    <location>
        <begin position="246"/>
        <end position="254"/>
    </location>
</feature>
<feature type="helix" evidence="20">
    <location>
        <begin position="257"/>
        <end position="262"/>
    </location>
</feature>
<feature type="helix" evidence="20">
    <location>
        <begin position="268"/>
        <end position="270"/>
    </location>
</feature>
<feature type="helix" evidence="20">
    <location>
        <begin position="272"/>
        <end position="275"/>
    </location>
</feature>
<feature type="helix" evidence="20">
    <location>
        <begin position="285"/>
        <end position="288"/>
    </location>
</feature>
<feature type="helix" evidence="20">
    <location>
        <begin position="293"/>
        <end position="295"/>
    </location>
</feature>
<feature type="helix" evidence="20">
    <location>
        <begin position="298"/>
        <end position="303"/>
    </location>
</feature>
<feature type="helix" evidence="20">
    <location>
        <begin position="313"/>
        <end position="327"/>
    </location>
</feature>
<feature type="helix" evidence="20">
    <location>
        <begin position="331"/>
        <end position="348"/>
    </location>
</feature>
<feature type="strand" evidence="20">
    <location>
        <begin position="352"/>
        <end position="354"/>
    </location>
</feature>
<feature type="turn" evidence="20">
    <location>
        <begin position="356"/>
        <end position="359"/>
    </location>
</feature>
<feature type="strand" evidence="20">
    <location>
        <begin position="360"/>
        <end position="364"/>
    </location>
</feature>
<feature type="helix" evidence="20">
    <location>
        <begin position="366"/>
        <end position="368"/>
    </location>
</feature>
<feature type="helix" evidence="20">
    <location>
        <begin position="369"/>
        <end position="377"/>
    </location>
</feature>
<feature type="helix" evidence="20">
    <location>
        <begin position="384"/>
        <end position="392"/>
    </location>
</feature>
<feature type="strand" evidence="20">
    <location>
        <begin position="393"/>
        <end position="395"/>
    </location>
</feature>
<feature type="strand" evidence="25">
    <location>
        <begin position="400"/>
        <end position="403"/>
    </location>
</feature>
<feature type="strand" evidence="20">
    <location>
        <begin position="409"/>
        <end position="411"/>
    </location>
</feature>
<feature type="helix" evidence="20">
    <location>
        <begin position="414"/>
        <end position="441"/>
    </location>
</feature>
<feature type="strand" evidence="20">
    <location>
        <begin position="450"/>
        <end position="457"/>
    </location>
</feature>
<feature type="strand" evidence="23">
    <location>
        <begin position="465"/>
        <end position="467"/>
    </location>
</feature>
<feature type="helix" evidence="20">
    <location>
        <begin position="469"/>
        <end position="489"/>
    </location>
</feature>
<feature type="helix" evidence="20">
    <location>
        <begin position="492"/>
        <end position="499"/>
    </location>
</feature>
<feature type="helix" evidence="20">
    <location>
        <begin position="513"/>
        <end position="520"/>
    </location>
</feature>
<feature type="turn" evidence="20">
    <location>
        <begin position="522"/>
        <end position="524"/>
    </location>
</feature>
<feature type="helix" evidence="20">
    <location>
        <begin position="526"/>
        <end position="535"/>
    </location>
</feature>
<feature type="strand" evidence="20">
    <location>
        <begin position="536"/>
        <end position="538"/>
    </location>
</feature>
<feature type="helix" evidence="20">
    <location>
        <begin position="541"/>
        <end position="551"/>
    </location>
</feature>
<feature type="turn" evidence="20">
    <location>
        <begin position="552"/>
        <end position="554"/>
    </location>
</feature>
<feature type="strand" evidence="19">
    <location>
        <begin position="556"/>
        <end position="559"/>
    </location>
</feature>
<feature type="helix" evidence="20">
    <location>
        <begin position="561"/>
        <end position="563"/>
    </location>
</feature>
<feature type="strand" evidence="22">
    <location>
        <begin position="564"/>
        <end position="566"/>
    </location>
</feature>
<feature type="helix" evidence="20">
    <location>
        <begin position="567"/>
        <end position="569"/>
    </location>
</feature>
<feature type="strand" evidence="20">
    <location>
        <begin position="576"/>
        <end position="582"/>
    </location>
</feature>
<feature type="strand" evidence="20">
    <location>
        <begin position="585"/>
        <end position="590"/>
    </location>
</feature>
<feature type="helix" evidence="20">
    <location>
        <begin position="594"/>
        <end position="597"/>
    </location>
</feature>
<feature type="helix" evidence="20">
    <location>
        <begin position="604"/>
        <end position="611"/>
    </location>
</feature>
<feature type="helix" evidence="20">
    <location>
        <begin position="616"/>
        <end position="621"/>
    </location>
</feature>
<feature type="helix" evidence="19">
    <location>
        <begin position="624"/>
        <end position="629"/>
    </location>
</feature>
<feature type="helix" evidence="19">
    <location>
        <begin position="634"/>
        <end position="638"/>
    </location>
</feature>
<feature type="helix" evidence="20">
    <location>
        <begin position="644"/>
        <end position="660"/>
    </location>
</feature>
<feature type="strand" evidence="20">
    <location>
        <begin position="662"/>
        <end position="670"/>
    </location>
</feature>
<feature type="helix" evidence="20">
    <location>
        <begin position="683"/>
        <end position="692"/>
    </location>
</feature>
<feature type="helix" evidence="20">
    <location>
        <begin position="695"/>
        <end position="702"/>
    </location>
</feature>
<feature type="strand" evidence="21">
    <location>
        <begin position="704"/>
        <end position="706"/>
    </location>
</feature>
<feature type="strand" evidence="20">
    <location>
        <begin position="707"/>
        <end position="711"/>
    </location>
</feature>
<feature type="helix" evidence="20">
    <location>
        <begin position="712"/>
        <end position="719"/>
    </location>
</feature>
<feature type="helix" evidence="20">
    <location>
        <begin position="720"/>
        <end position="722"/>
    </location>
</feature>
<feature type="helix" evidence="20">
    <location>
        <begin position="725"/>
        <end position="728"/>
    </location>
</feature>
<feature type="helix" evidence="20">
    <location>
        <begin position="732"/>
        <end position="742"/>
    </location>
</feature>
<feature type="helix" evidence="20">
    <location>
        <begin position="747"/>
        <end position="749"/>
    </location>
</feature>
<feature type="strand" evidence="20">
    <location>
        <begin position="750"/>
        <end position="752"/>
    </location>
</feature>
<feature type="strand" evidence="20">
    <location>
        <begin position="754"/>
        <end position="759"/>
    </location>
</feature>
<feature type="helix" evidence="20">
    <location>
        <begin position="764"/>
        <end position="771"/>
    </location>
</feature>
<feature type="helix" evidence="20">
    <location>
        <begin position="775"/>
        <end position="788"/>
    </location>
</feature>
<feature type="strand" evidence="19">
    <location>
        <begin position="818"/>
        <end position="820"/>
    </location>
</feature>
<feature type="turn" evidence="19">
    <location>
        <begin position="822"/>
        <end position="825"/>
    </location>
</feature>
<feature type="helix" evidence="24">
    <location>
        <begin position="867"/>
        <end position="886"/>
    </location>
</feature>
<feature type="helix" evidence="24">
    <location>
        <begin position="893"/>
        <end position="913"/>
    </location>
</feature>
<reference key="1">
    <citation type="journal article" date="1994" name="J. Cell Biol.">
        <title>Porcine myosin-VI: characterization of a new mammalian unconventional myosin.</title>
        <authorList>
            <person name="Hasson T."/>
            <person name="Mooseker M.S."/>
        </authorList>
    </citation>
    <scope>NUCLEOTIDE SEQUENCE [MRNA]</scope>
    <scope>FUNCTION</scope>
    <scope>INTERACTION WITH ACTN1</scope>
    <scope>SUBCELLULAR LOCATION</scope>
    <scope>TISSUE SPECIFICITY</scope>
    <source>
        <tissue>Kidney</tissue>
    </source>
</reference>
<reference key="2">
    <citation type="journal article" date="1994" name="Proc. Natl. Acad. Sci. U.S.A.">
        <title>Identification and overlapping expression of multiple unconventional myosin genes in vertebrate cell types.</title>
        <authorList>
            <person name="Bement W.M."/>
            <person name="Hasson T."/>
            <person name="Wirth J.A."/>
            <person name="Cheney R.E."/>
            <person name="Mooseker M.S."/>
        </authorList>
    </citation>
    <scope>NUCLEOTIDE SEQUENCE [MRNA]</scope>
    <source>
        <tissue>Kidney</tissue>
    </source>
</reference>
<reference key="3">
    <citation type="journal article" date="1994" name="Proc. Natl. Acad. Sci. U.S.A.">
        <authorList>
            <person name="Bement W.M."/>
            <person name="Hasson T."/>
            <person name="Wirth J.A."/>
            <person name="Cheney R.E."/>
            <person name="Mooseker M.S."/>
        </authorList>
    </citation>
    <scope>ERRATUM OF PUBMED:8022818</scope>
</reference>
<reference key="4">
    <citation type="journal article" date="2003" name="J. Biol. Chem.">
        <title>Calcium functionally uncouples the heads of myosin VI.</title>
        <authorList>
            <person name="Morris C.A."/>
            <person name="Wells A.L."/>
            <person name="Yang Z."/>
            <person name="Chen L.Q."/>
            <person name="Baldacchino C.V."/>
            <person name="Sweeney H.L."/>
        </authorList>
    </citation>
    <scope>PHOSPHORYLATION AT THR-406</scope>
    <scope>CALCIUM-BINDING</scope>
    <scope>MUTAGENESIS OF THR-406</scope>
</reference>
<reference key="5">
    <citation type="journal article" date="2004" name="Proc. Natl. Acad. Sci. U.S.A.">
        <title>The unique insert in myosin VI is a structural calcium-calmodulin binding site.</title>
        <authorList>
            <person name="Bahloul A."/>
            <person name="Chevreux G."/>
            <person name="Wells A.L."/>
            <person name="Martin D."/>
            <person name="Nolt J."/>
            <person name="Yang Z."/>
            <person name="Chen L.-Q."/>
            <person name="Potier N."/>
            <person name="van Dorsselaer A."/>
            <person name="Rosenfeld S."/>
            <person name="Houdusse A."/>
            <person name="Sweeney H.L."/>
        </authorList>
    </citation>
    <scope>CALCIUM-CALMODULIN BINDING SITE</scope>
    <scope>DOMAIN</scope>
</reference>
<reference key="6">
    <citation type="journal article" date="2006" name="Cell Motil. Cytoskeleton">
        <title>Myosin VI altered at threonine 406 stabilizes actin filaments in vivo.</title>
        <authorList>
            <person name="Naccache S.N."/>
            <person name="Hasson T."/>
        </authorList>
    </citation>
    <scope>MUTAGENESIS OF THR-406</scope>
    <scope>POSSIBLE FUNCTION</scope>
    <scope>SUBCELLULAR LOCATION</scope>
</reference>
<reference key="7">
    <citation type="journal article" date="2014" name="Cell Rep.">
        <title>Myosin VI must dimerize and deploy its unusual lever arm in order to perform its cellular roles.</title>
        <authorList>
            <person name="Mukherjea M."/>
            <person name="Ali M.Y."/>
            <person name="Kikuti C."/>
            <person name="Safer D."/>
            <person name="Yang Z."/>
            <person name="Sirkia H."/>
            <person name="Ropars V."/>
            <person name="Houdusse A."/>
            <person name="Warshaw D.M."/>
            <person name="Sweeney H.L."/>
        </authorList>
    </citation>
    <scope>SUBUNIT</scope>
    <scope>DOMAIN</scope>
    <scope>MUTAGENESIS OF PHE-854; VAL-857; VAL-858 AND LEU-861</scope>
</reference>
<reference key="8">
    <citation type="journal article" date="2005" name="Nature">
        <title>The structure of the myosin VI motor reveals the mechanism of directionality reversal.</title>
        <authorList>
            <person name="Menetrey J."/>
            <person name="Bahloul A."/>
            <person name="Wells A.L."/>
            <person name="Yengo C.M."/>
            <person name="Morris C.A."/>
            <person name="Sweeney H.L."/>
            <person name="Houdusse A."/>
        </authorList>
    </citation>
    <scope>X-RAY CRYSTALLOGRAPHY (2.4 ANGSTROMS) OF 1-859 IN COMPLEX WITH CALMODULIN</scope>
    <scope>ATPASE ACTIVITY</scope>
</reference>
<reference key="9">
    <citation type="journal article" date="2009" name="Mol. Cell">
        <title>Myosin VI dimerization triggers an unfolding of a three-helix bundle in order to extend its reach.</title>
        <authorList>
            <person name="Mukherjea M."/>
            <person name="Llinas P."/>
            <person name="Kim H."/>
            <person name="Travaglia M."/>
            <person name="Safer D."/>
            <person name="Menetrey J."/>
            <person name="Franzini-Armstrong C."/>
            <person name="Selvin P.R."/>
            <person name="Houdusse A."/>
            <person name="Sweeney H.L."/>
        </authorList>
    </citation>
    <scope>X-RAY CRYSTALLOGRAPHY (2.7 ANGSTROMS) OF 771-918</scope>
    <scope>SUBUNIT</scope>
    <scope>DOMAIN</scope>
</reference>
<accession>Q29122</accession>
<sequence>MEDGKPVWAPHPTDGFQVGNIVDIGPDSLTIEPLNQKGKTFLALINQVFPAEEDSKKDVEDNCSLMYLNEATLLHNIKVRYSKDRIYTYVANILIAVNPYFDIPKIYSSETIKSYQGKSLGTMPPHVFAIADKAFRDMKVLKLSQSIIVSGESGAGKTENTKFVLRYLTESYGTGQDIDDRIVEANPLLEAFGNAKTVRNNNSSRFGKFVEIHFNEKSSVVGGFVSHYLLEKSRICVQGKEERNYHIFYRLCAGASEDIRERLHLSSPDNFRYLNRGCTRYFANKETDKQILQNRKSPEYLKAGSLKDPLLDDHGDFIRMCTAMKKIGLDDEEKLDLFRVVAGVLHLGNIDFEEAGSTSGGCNLKNKSTQALEYCAEKLLGLDQDDLRVSLTTRVMLTTAGGAKGTVIKVPLKVEQANNARDALAKTVYSHLFDHVVNRVNQCFPFETSSYFIGVLDIAGFEYFEHNSFEQFCINYCNEKLQQFFNERILKEEQELYQKEGLGVNEVHYVDNQDCIDLIEARLVGILDILDEENRLPQPSDQHFTSAGHQKHKDHFRLSIPRKSKLAIHRNIAYDEGFIIRHFAGAVCYETTQFVEKNNDALHMSLESLICESRDKFIRELFESSTNNNKDTKQKAGKLSFISVGNKFKTQLNLLLDKLRSTGASFIRCIKPNLKMTSHHFEGAQILSQLQCSGMVSVLDLMQGGFPSRASFHEVYNMYKKSLPDKLARLDPRLFCKALFKALGLNEIDYKFGLTKVFFRPGKFAEFDQIMKSDPDHLAELVKRVNHWLICSRWKKVQWCSLSVIKLKNKIKYRAEACIKMQKTIRMWLCKRRHKPRIDGLVKVGTLKKRLDKFNEVVSALKDGKQEMSKQVKDLEISIDALMAKIKSTMMTREQIQKEYDALVKSSAVLLSALQKKKQQEEEAERLRRIQEEMEKERKRREEDEQRRRKEEEERRMKLEMEAKRKQEEEERKKREDDEKRIQAEVEAQLARQREEESQQQAVLEQERRDRELALRIAQSEAELISDEAQADPGLRRGPAVQATKAAAGTKKYDLSKWKYAELRDTINTSCDIELLAACREEFHRRLKVYHAWKSKNKKRNTETEQRAPKSVTDYAQQNPAVQLPARQQEIEMNRQQRFFRIPFIRSADQYKDPQNKKKGWWYAHFDGPWIARQMELHPDKPPILLVAGKDDMEMCELNLEETGLTRKRGAEILPRQFEEIWERCGGIQYLQNAIESRQARPTYATAMLQNLLK</sequence>
<keyword id="KW-0002">3D-structure</keyword>
<keyword id="KW-0009">Actin-binding</keyword>
<keyword id="KW-0067">ATP-binding</keyword>
<keyword id="KW-0112">Calmodulin-binding</keyword>
<keyword id="KW-1003">Cell membrane</keyword>
<keyword id="KW-0966">Cell projection</keyword>
<keyword id="KW-0168">Coated pit</keyword>
<keyword id="KW-0963">Cytoplasm</keyword>
<keyword id="KW-0968">Cytoplasmic vesicle</keyword>
<keyword id="KW-0254">Endocytosis</keyword>
<keyword id="KW-0333">Golgi apparatus</keyword>
<keyword id="KW-1009">Hearing</keyword>
<keyword id="KW-0472">Membrane</keyword>
<keyword id="KW-0505">Motor protein</keyword>
<keyword id="KW-0518">Myosin</keyword>
<keyword id="KW-0547">Nucleotide-binding</keyword>
<keyword id="KW-0539">Nucleus</keyword>
<keyword id="KW-0597">Phosphoprotein</keyword>
<keyword id="KW-0653">Protein transport</keyword>
<keyword id="KW-1185">Reference proteome</keyword>
<keyword id="KW-0813">Transport</keyword>
<proteinExistence type="evidence at protein level"/>
<evidence type="ECO:0000250" key="1">
    <source>
        <dbReference type="UniProtKB" id="E1BPK6"/>
    </source>
</evidence>
<evidence type="ECO:0000250" key="2">
    <source>
        <dbReference type="UniProtKB" id="Q64331"/>
    </source>
</evidence>
<evidence type="ECO:0000250" key="3">
    <source>
        <dbReference type="UniProtKB" id="Q9I8D1"/>
    </source>
</evidence>
<evidence type="ECO:0000250" key="4">
    <source>
        <dbReference type="UniProtKB" id="Q9UM54"/>
    </source>
</evidence>
<evidence type="ECO:0000255" key="5"/>
<evidence type="ECO:0000255" key="6">
    <source>
        <dbReference type="PROSITE-ProRule" id="PRU00782"/>
    </source>
</evidence>
<evidence type="ECO:0000255" key="7">
    <source>
        <dbReference type="PROSITE-ProRule" id="PRU01190"/>
    </source>
</evidence>
<evidence type="ECO:0000256" key="8">
    <source>
        <dbReference type="SAM" id="MobiDB-lite"/>
    </source>
</evidence>
<evidence type="ECO:0000269" key="9">
    <source>
    </source>
</evidence>
<evidence type="ECO:0000269" key="10">
    <source>
    </source>
</evidence>
<evidence type="ECO:0000269" key="11">
    <source>
    </source>
</evidence>
<evidence type="ECO:0000269" key="12">
    <source>
    </source>
</evidence>
<evidence type="ECO:0000269" key="13">
    <source>
    </source>
</evidence>
<evidence type="ECO:0000269" key="14">
    <source>
    </source>
</evidence>
<evidence type="ECO:0000269" key="15">
    <source>
    </source>
</evidence>
<evidence type="ECO:0000305" key="16"/>
<evidence type="ECO:0000305" key="17">
    <source>
    </source>
</evidence>
<evidence type="ECO:0007829" key="18">
    <source>
        <dbReference type="PDB" id="2BKH"/>
    </source>
</evidence>
<evidence type="ECO:0007829" key="19">
    <source>
        <dbReference type="PDB" id="2BKI"/>
    </source>
</evidence>
<evidence type="ECO:0007829" key="20">
    <source>
        <dbReference type="PDB" id="2V26"/>
    </source>
</evidence>
<evidence type="ECO:0007829" key="21">
    <source>
        <dbReference type="PDB" id="2VAS"/>
    </source>
</evidence>
<evidence type="ECO:0007829" key="22">
    <source>
        <dbReference type="PDB" id="2VB6"/>
    </source>
</evidence>
<evidence type="ECO:0007829" key="23">
    <source>
        <dbReference type="PDB" id="2X51"/>
    </source>
</evidence>
<evidence type="ECO:0007829" key="24">
    <source>
        <dbReference type="PDB" id="3GN4"/>
    </source>
</evidence>
<evidence type="ECO:0007829" key="25">
    <source>
        <dbReference type="PDB" id="3L9I"/>
    </source>
</evidence>
<evidence type="ECO:0007829" key="26">
    <source>
        <dbReference type="PDB" id="4DBP"/>
    </source>
</evidence>
<evidence type="ECO:0007829" key="27">
    <source>
        <dbReference type="PDB" id="5O2L"/>
    </source>
</evidence>
<organism>
    <name type="scientific">Sus scrofa</name>
    <name type="common">Pig</name>
    <dbReference type="NCBI Taxonomy" id="9823"/>
    <lineage>
        <taxon>Eukaryota</taxon>
        <taxon>Metazoa</taxon>
        <taxon>Chordata</taxon>
        <taxon>Craniata</taxon>
        <taxon>Vertebrata</taxon>
        <taxon>Euteleostomi</taxon>
        <taxon>Mammalia</taxon>
        <taxon>Eutheria</taxon>
        <taxon>Laurasiatheria</taxon>
        <taxon>Artiodactyla</taxon>
        <taxon>Suina</taxon>
        <taxon>Suidae</taxon>
        <taxon>Sus</taxon>
    </lineage>
</organism>